<comment type="similarity">
    <text evidence="1">Belongs to the bacterial ribosomal protein bS21 family.</text>
</comment>
<dbReference type="EMBL" id="BA000037">
    <property type="protein sequence ID" value="BAC93328.1"/>
    <property type="molecule type" value="Genomic_DNA"/>
</dbReference>
<dbReference type="RefSeq" id="WP_001145625.1">
    <property type="nucleotide sequence ID" value="NC_005139.1"/>
</dbReference>
<dbReference type="SMR" id="Q7MP00"/>
<dbReference type="STRING" id="672.VV93_v1c05060"/>
<dbReference type="GeneID" id="97540092"/>
<dbReference type="KEGG" id="vvy:VV0564"/>
<dbReference type="eggNOG" id="COG0828">
    <property type="taxonomic scope" value="Bacteria"/>
</dbReference>
<dbReference type="HOGENOM" id="CLU_159258_1_0_6"/>
<dbReference type="Proteomes" id="UP000002675">
    <property type="component" value="Chromosome I"/>
</dbReference>
<dbReference type="GO" id="GO:1990904">
    <property type="term" value="C:ribonucleoprotein complex"/>
    <property type="evidence" value="ECO:0007669"/>
    <property type="project" value="UniProtKB-KW"/>
</dbReference>
<dbReference type="GO" id="GO:0005840">
    <property type="term" value="C:ribosome"/>
    <property type="evidence" value="ECO:0007669"/>
    <property type="project" value="UniProtKB-KW"/>
</dbReference>
<dbReference type="GO" id="GO:0003735">
    <property type="term" value="F:structural constituent of ribosome"/>
    <property type="evidence" value="ECO:0007669"/>
    <property type="project" value="InterPro"/>
</dbReference>
<dbReference type="GO" id="GO:0006412">
    <property type="term" value="P:translation"/>
    <property type="evidence" value="ECO:0007669"/>
    <property type="project" value="UniProtKB-UniRule"/>
</dbReference>
<dbReference type="FunFam" id="1.20.5.1150:FF:000001">
    <property type="entry name" value="30S ribosomal protein S21"/>
    <property type="match status" value="1"/>
</dbReference>
<dbReference type="Gene3D" id="1.20.5.1150">
    <property type="entry name" value="Ribosomal protein S8"/>
    <property type="match status" value="1"/>
</dbReference>
<dbReference type="HAMAP" id="MF_00358">
    <property type="entry name" value="Ribosomal_bS21"/>
    <property type="match status" value="1"/>
</dbReference>
<dbReference type="InterPro" id="IPR001911">
    <property type="entry name" value="Ribosomal_bS21"/>
</dbReference>
<dbReference type="InterPro" id="IPR018278">
    <property type="entry name" value="Ribosomal_bS21_CS"/>
</dbReference>
<dbReference type="InterPro" id="IPR038380">
    <property type="entry name" value="Ribosomal_bS21_sf"/>
</dbReference>
<dbReference type="NCBIfam" id="TIGR00030">
    <property type="entry name" value="S21p"/>
    <property type="match status" value="1"/>
</dbReference>
<dbReference type="PANTHER" id="PTHR21109">
    <property type="entry name" value="MITOCHONDRIAL 28S RIBOSOMAL PROTEIN S21"/>
    <property type="match status" value="1"/>
</dbReference>
<dbReference type="PANTHER" id="PTHR21109:SF22">
    <property type="entry name" value="SMALL RIBOSOMAL SUBUNIT PROTEIN BS21"/>
    <property type="match status" value="1"/>
</dbReference>
<dbReference type="Pfam" id="PF01165">
    <property type="entry name" value="Ribosomal_S21"/>
    <property type="match status" value="1"/>
</dbReference>
<dbReference type="PRINTS" id="PR00976">
    <property type="entry name" value="RIBOSOMALS21"/>
</dbReference>
<dbReference type="PROSITE" id="PS01181">
    <property type="entry name" value="RIBOSOMAL_S21"/>
    <property type="match status" value="1"/>
</dbReference>
<name>RS21_VIBVY</name>
<gene>
    <name evidence="1" type="primary">rpsU</name>
    <name type="ordered locus">VV0564</name>
</gene>
<keyword id="KW-0687">Ribonucleoprotein</keyword>
<keyword id="KW-0689">Ribosomal protein</keyword>
<accession>Q7MP00</accession>
<organism>
    <name type="scientific">Vibrio vulnificus (strain YJ016)</name>
    <dbReference type="NCBI Taxonomy" id="196600"/>
    <lineage>
        <taxon>Bacteria</taxon>
        <taxon>Pseudomonadati</taxon>
        <taxon>Pseudomonadota</taxon>
        <taxon>Gammaproteobacteria</taxon>
        <taxon>Vibrionales</taxon>
        <taxon>Vibrionaceae</taxon>
        <taxon>Vibrio</taxon>
    </lineage>
</organism>
<reference key="1">
    <citation type="journal article" date="2003" name="Genome Res.">
        <title>Comparative genome analysis of Vibrio vulnificus, a marine pathogen.</title>
        <authorList>
            <person name="Chen C.-Y."/>
            <person name="Wu K.-M."/>
            <person name="Chang Y.-C."/>
            <person name="Chang C.-H."/>
            <person name="Tsai H.-C."/>
            <person name="Liao T.-L."/>
            <person name="Liu Y.-M."/>
            <person name="Chen H.-J."/>
            <person name="Shen A.B.-T."/>
            <person name="Li J.-C."/>
            <person name="Su T.-L."/>
            <person name="Shao C.-P."/>
            <person name="Lee C.-T."/>
            <person name="Hor L.-I."/>
            <person name="Tsai S.-F."/>
        </authorList>
    </citation>
    <scope>NUCLEOTIDE SEQUENCE [LARGE SCALE GENOMIC DNA]</scope>
    <source>
        <strain>YJ016</strain>
    </source>
</reference>
<feature type="chain" id="PRO_0000178402" description="Small ribosomal subunit protein bS21">
    <location>
        <begin position="1"/>
        <end position="71"/>
    </location>
</feature>
<feature type="region of interest" description="Disordered" evidence="2">
    <location>
        <begin position="39"/>
        <end position="71"/>
    </location>
</feature>
<feature type="compositionally biased region" description="Basic residues" evidence="2">
    <location>
        <begin position="43"/>
        <end position="59"/>
    </location>
</feature>
<feature type="compositionally biased region" description="Basic and acidic residues" evidence="2">
    <location>
        <begin position="60"/>
        <end position="71"/>
    </location>
</feature>
<protein>
    <recommendedName>
        <fullName evidence="1">Small ribosomal subunit protein bS21</fullName>
    </recommendedName>
    <alternativeName>
        <fullName evidence="3">30S ribosomal protein S21</fullName>
    </alternativeName>
</protein>
<sequence length="71" mass="8487">MPVVKVRENEPFDVALRRFKRSCEKAGILSEVRRREHYEKPTTVRKRAKAAAQKRHAKKLARENARRVRLY</sequence>
<evidence type="ECO:0000255" key="1">
    <source>
        <dbReference type="HAMAP-Rule" id="MF_00358"/>
    </source>
</evidence>
<evidence type="ECO:0000256" key="2">
    <source>
        <dbReference type="SAM" id="MobiDB-lite"/>
    </source>
</evidence>
<evidence type="ECO:0000305" key="3"/>
<proteinExistence type="inferred from homology"/>